<organism>
    <name type="scientific">Mus musculus</name>
    <name type="common">Mouse</name>
    <dbReference type="NCBI Taxonomy" id="10090"/>
    <lineage>
        <taxon>Eukaryota</taxon>
        <taxon>Metazoa</taxon>
        <taxon>Chordata</taxon>
        <taxon>Craniata</taxon>
        <taxon>Vertebrata</taxon>
        <taxon>Euteleostomi</taxon>
        <taxon>Mammalia</taxon>
        <taxon>Eutheria</taxon>
        <taxon>Euarchontoglires</taxon>
        <taxon>Glires</taxon>
        <taxon>Rodentia</taxon>
        <taxon>Myomorpha</taxon>
        <taxon>Muroidea</taxon>
        <taxon>Muridae</taxon>
        <taxon>Murinae</taxon>
        <taxon>Mus</taxon>
        <taxon>Mus</taxon>
    </lineage>
</organism>
<name>GRIP1_MOUSE</name>
<keyword id="KW-0002">3D-structure</keyword>
<keyword id="KW-0025">Alternative splicing</keyword>
<keyword id="KW-1003">Cell membrane</keyword>
<keyword id="KW-0966">Cell projection</keyword>
<keyword id="KW-0963">Cytoplasm</keyword>
<keyword id="KW-0968">Cytoplasmic vesicle</keyword>
<keyword id="KW-0256">Endoplasmic reticulum</keyword>
<keyword id="KW-0449">Lipoprotein</keyword>
<keyword id="KW-0472">Membrane</keyword>
<keyword id="KW-0564">Palmitate</keyword>
<keyword id="KW-0597">Phosphoprotein</keyword>
<keyword id="KW-0628">Postsynaptic cell membrane</keyword>
<keyword id="KW-1185">Reference proteome</keyword>
<keyword id="KW-0677">Repeat</keyword>
<keyword id="KW-0770">Synapse</keyword>
<proteinExistence type="evidence at protein level"/>
<accession>Q925T6</accession>
<accession>Q8BLQ3</accession>
<accession>Q8C0T3</accession>
<accession>Q925T5</accession>
<accession>Q925T7</accession>
<comment type="function">
    <text evidence="1 2">May play a role as a localized scaffold for the assembly of a multiprotein signaling complex and as mediator of the trafficking of its binding partners at specific subcellular location in neurons (By similarity). Through complex formation with NSG1, GRIA2 and STX12 controls the intracellular fate of AMPAR and the endosomal sorting of the GRIA2 subunit toward recycling and membrane targeting (By similarity).</text>
</comment>
<comment type="subunit">
    <text evidence="1 2">Interacts with EFNB3, GRIA2, GRIA3, GRIPAP1/GRASP1, PPFIA1, PPFIA4, FRAS1, PTPRF, liprins-alpha and the C-terminal tail of PRLHR. Can form homomultimers or heteromultimers with GRIP2 (By similarity). Interacts with EFNB1, EPHA7, EPHB2, KIF5A, KIF5B and KIF5C. Forms a ternary complex with GRIA2 and CSPG4. Interacts with ATAD1 in an ATP-dependent manner. ATAD1-catalyzed ATP hydrolysis disrupts binding to ATAD1 and to GRIA2 and leads to AMPAR complex disassembly. Interacts with SLC30A9 and PLCD4. Interacts with BUD23 (By similarity). Forms a complex with NSG1, GRIA2 and STX12; controls the intracellular fate of AMPAR and the endosomal sorting of the GRIA2 subunit toward recycling and membrane targeting. Interacts with NSG1 (By similarity).</text>
</comment>
<comment type="interaction">
    <interactant intactId="EBI-537752">
        <id>Q925T6</id>
    </interactant>
    <interactant intactId="EBI-8327479">
        <id>Q8VHY0</id>
        <label>Cspg4</label>
    </interactant>
    <organismsDiffer>false</organismsDiffer>
    <experiments>7</experiments>
</comment>
<comment type="interaction">
    <interactant intactId="EBI-537752">
        <id>Q925T6</id>
    </interactant>
    <interactant intactId="EBI-537711">
        <id>P54763</id>
        <label>Ephb2</label>
    </interactant>
    <organismsDiffer>false</organismsDiffer>
    <experiments>2</experiments>
</comment>
<comment type="interaction">
    <interactant intactId="EBI-537752">
        <id>Q925T6</id>
    </interactant>
    <interactant intactId="EBI-77538">
        <id>P23819</id>
        <label>Gria2</label>
    </interactant>
    <organismsDiffer>false</organismsDiffer>
    <experiments>5</experiments>
</comment>
<comment type="interaction">
    <interactant intactId="EBI-537752">
        <id>Q925T6</id>
    </interactant>
    <interactant intactId="EBI-2270972">
        <id>Q3UZ39</id>
        <label>Lrrfip1</label>
    </interactant>
    <organismsDiffer>false</organismsDiffer>
    <experiments>2</experiments>
</comment>
<comment type="interaction">
    <interactant intactId="EBI-537752">
        <id>Q925T6</id>
    </interactant>
    <interactant intactId="EBI-346797">
        <id>P48281</id>
        <label>Vdr</label>
    </interactant>
    <organismsDiffer>false</organismsDiffer>
    <experiments>2</experiments>
</comment>
<comment type="subcellular location">
    <molecule>Isoform 2</molecule>
    <subcellularLocation>
        <location>Membrane</location>
        <topology>Lipid-anchor</topology>
    </subcellularLocation>
</comment>
<comment type="subcellular location">
    <subcellularLocation>
        <location evidence="3">Cytoplasmic vesicle</location>
    </subcellularLocation>
    <subcellularLocation>
        <location evidence="2">Perikaryon</location>
    </subcellularLocation>
    <subcellularLocation>
        <location evidence="2">Cell projection</location>
        <location evidence="2">Dendrite</location>
    </subcellularLocation>
    <subcellularLocation>
        <location evidence="2">Cytoplasm</location>
    </subcellularLocation>
    <subcellularLocation>
        <location evidence="2">Endomembrane system</location>
        <topology evidence="2">Peripheral membrane protein</topology>
    </subcellularLocation>
    <subcellularLocation>
        <location evidence="2">Postsynaptic cell membrane</location>
    </subcellularLocation>
    <subcellularLocation>
        <location evidence="2">Postsynaptic density</location>
    </subcellularLocation>
    <subcellularLocation>
        <location evidence="3">Endoplasmic reticulum membrane</location>
        <topology evidence="2">Peripheral membrane protein</topology>
    </subcellularLocation>
    <text evidence="2">Membrane-associated with vesicles, peri-Golgi complexes and endoplasmic reticulum. Enriched in postsynaptic plasma membrane and postsynaptic densities.</text>
</comment>
<comment type="alternative products">
    <event type="alternative splicing"/>
    <isoform>
        <id>Q925T6-1</id>
        <name>1</name>
        <name>GRIP1a-L</name>
        <sequence type="displayed"/>
    </isoform>
    <isoform>
        <id>Q925T6-2</id>
        <name>2</name>
        <name>GRIP1b</name>
        <name>GRIP1b-S</name>
        <sequence type="described" ref="VSP_009744 VSP_009747 VSP_009750"/>
    </isoform>
    <isoform>
        <id>Q925T6-3</id>
        <name>3</name>
        <name>GRIP1a-S</name>
        <sequence type="described" ref="VSP_009746 VSP_009747 VSP_009750"/>
    </isoform>
    <isoform>
        <id>Q925T6-4</id>
        <name>4</name>
        <sequence type="described" ref="VSP_009745 VSP_009748 VSP_009749 VSP_009750"/>
    </isoform>
</comment>
<comment type="tissue specificity">
    <text evidence="6 7">Expressed in brain. Isoform 2 is the major isoform in brain. Expressed in oligodendrocyte lineage cells.</text>
</comment>
<comment type="developmental stage">
    <text evidence="6">Detected in early development between postnatal days 3 (P3) and P8 and decreased from P14 in forebrain and cerebellum.</text>
</comment>
<comment type="domain">
    <text evidence="1 7">PDZ 6 mediates interaction with the PDZ recognition motif of EFNB1 and EPHB2 and with the C-terminus of PPFIA1 and PPFIA4. PDZ 4 and PDZ 5 mediate interaction with the C-terminus of GRIA2 and GRIA3. PDZ 4, PDZ 5 and PDZ 6 mediate homomultimers. PDZ 7 mediates interaction with PDZ domain of GRASP1. PDZ 6 mediates interaction with the C-terminal of liprins-alpha. PDZ 1, PDZ 2 and PDZ 3 mediate interaction with the PDZ-binding motif of FRAS1. PDZ 4 and PDZ 5 mediate interaction with PRLHR (By similarity). PDZ 7 domain binds CSPG4.</text>
</comment>
<comment type="PTM">
    <text evidence="6">Palmitoylation of isoform 2.</text>
</comment>
<comment type="miscellaneous">
    <molecule>Isoform 2</molecule>
    <text evidence="10">Major isoform.</text>
</comment>
<comment type="miscellaneous">
    <molecule>Isoform 3</molecule>
    <text evidence="10">May be due to exons 2, 10 and 11 skipping.</text>
</comment>
<feature type="chain" id="PRO_0000083850" description="Glutamate receptor-interacting protein 1">
    <location>
        <begin position="1"/>
        <end position="1127"/>
    </location>
</feature>
<feature type="domain" description="PDZ 1" evidence="4">
    <location>
        <begin position="53"/>
        <end position="136"/>
    </location>
</feature>
<feature type="domain" description="PDZ 2" evidence="4">
    <location>
        <begin position="150"/>
        <end position="238"/>
    </location>
</feature>
<feature type="domain" description="PDZ 3" evidence="4">
    <location>
        <begin position="252"/>
        <end position="336"/>
    </location>
</feature>
<feature type="domain" description="PDZ 4" evidence="4">
    <location>
        <begin position="471"/>
        <end position="560"/>
    </location>
</feature>
<feature type="domain" description="PDZ 5" evidence="4">
    <location>
        <begin position="572"/>
        <end position="657"/>
    </location>
</feature>
<feature type="domain" description="PDZ 6" evidence="4">
    <location>
        <begin position="672"/>
        <end position="754"/>
    </location>
</feature>
<feature type="domain" description="PDZ 7" evidence="4">
    <location>
        <begin position="1003"/>
        <end position="1085"/>
    </location>
</feature>
<feature type="region of interest" description="Disordered" evidence="5">
    <location>
        <begin position="752"/>
        <end position="802"/>
    </location>
</feature>
<feature type="region of interest" description="Disordered" evidence="5">
    <location>
        <begin position="840"/>
        <end position="865"/>
    </location>
</feature>
<feature type="region of interest" description="Disordered" evidence="5">
    <location>
        <begin position="942"/>
        <end position="980"/>
    </location>
</feature>
<feature type="region of interest" description="Disordered" evidence="5">
    <location>
        <begin position="1108"/>
        <end position="1127"/>
    </location>
</feature>
<feature type="compositionally biased region" description="Polar residues" evidence="5">
    <location>
        <begin position="840"/>
        <end position="856"/>
    </location>
</feature>
<feature type="compositionally biased region" description="Polar residues" evidence="5">
    <location>
        <begin position="947"/>
        <end position="973"/>
    </location>
</feature>
<feature type="modified residue" description="Phosphoserine" evidence="2">
    <location>
        <position position="43"/>
    </location>
</feature>
<feature type="splice variant" id="VSP_009745" description="In isoform 4." evidence="9">
    <location>
        <begin position="1"/>
        <end position="415"/>
    </location>
</feature>
<feature type="splice variant" id="VSP_009744" description="In isoform 2." evidence="8">
    <original>MIAVSFKCRCQILRRLTKDESPYTKSASQTKPPDGALAVRRQSIP</original>
    <variation>MPGWKKNIPICLQAEEQER</variation>
    <location>
        <begin position="1"/>
        <end position="45"/>
    </location>
</feature>
<feature type="splice variant" id="VSP_009746" description="In isoform 3." evidence="8">
    <location>
        <begin position="19"/>
        <end position="45"/>
    </location>
</feature>
<feature type="splice variant" id="VSP_009747" description="In isoform 2 and isoform 3." evidence="8">
    <original>VKIQRSDRQHPWDAWASNQCGVHTNHHHNTYHPDHCRVPALTFPKALPPNSPP</original>
    <variation>A</variation>
    <location>
        <begin position="348"/>
        <end position="400"/>
    </location>
</feature>
<feature type="splice variant" id="VSP_009748" description="In isoform 4." evidence="9">
    <original>LSSLNMGTLPRSLYSTSPRGTMMRRRLKKKDFKSSL</original>
    <variation>MTAKRAERKEMKRPNSFHLPFRPSLRKGQKKNAAHV</variation>
    <location>
        <begin position="416"/>
        <end position="451"/>
    </location>
</feature>
<feature type="splice variant" id="VSP_009749" description="In isoform 4." evidence="9">
    <location>
        <begin position="756"/>
        <end position="820"/>
    </location>
</feature>
<feature type="splice variant" id="VSP_009750" description="In isoform 2, isoform 3 and isoform 4." evidence="8 9">
    <location>
        <begin position="911"/>
        <end position="925"/>
    </location>
</feature>
<feature type="sequence conflict" description="In Ref. 2; BAC26668." evidence="10" ref="2">
    <original>G</original>
    <variation>C</variation>
    <location>
        <position position="1011"/>
    </location>
</feature>
<feature type="sequence conflict" description="In Ref. 2; BAC31662." evidence="10" ref="2">
    <original>L</original>
    <variation>M</variation>
    <location>
        <position position="1044"/>
    </location>
</feature>
<feature type="strand" evidence="11">
    <location>
        <begin position="467"/>
        <end position="474"/>
    </location>
</feature>
<feature type="strand" evidence="11">
    <location>
        <begin position="478"/>
        <end position="482"/>
    </location>
</feature>
<feature type="strand" evidence="11">
    <location>
        <begin position="484"/>
        <end position="487"/>
    </location>
</feature>
<feature type="strand" evidence="11">
    <location>
        <begin position="493"/>
        <end position="495"/>
    </location>
</feature>
<feature type="strand" evidence="11">
    <location>
        <begin position="501"/>
        <end position="505"/>
    </location>
</feature>
<feature type="helix" evidence="11">
    <location>
        <begin position="510"/>
        <end position="513"/>
    </location>
</feature>
<feature type="strand" evidence="11">
    <location>
        <begin position="523"/>
        <end position="526"/>
    </location>
</feature>
<feature type="strand" evidence="11">
    <location>
        <begin position="529"/>
        <end position="534"/>
    </location>
</feature>
<feature type="helix" evidence="11">
    <location>
        <begin position="536"/>
        <end position="546"/>
    </location>
</feature>
<feature type="turn" evidence="11">
    <location>
        <begin position="547"/>
        <end position="550"/>
    </location>
</feature>
<feature type="strand" evidence="11">
    <location>
        <begin position="552"/>
        <end position="559"/>
    </location>
</feature>
<feature type="lipid moiety-binding region" description="S-palmitoyl cysteine" evidence="10">
    <location sequence="Q925T6-2">
        <position position="11"/>
    </location>
</feature>
<gene>
    <name type="primary">Grip1</name>
</gene>
<protein>
    <recommendedName>
        <fullName>Glutamate receptor-interacting protein 1</fullName>
        <shortName>GRIP-1</shortName>
    </recommendedName>
</protein>
<reference key="1">
    <citation type="journal article" date="2001" name="Neurosci. Lett.">
        <title>Differential palmitoylation of two mouse glutamate receptor interacting protein 1 forms with different N-terminal sequences.</title>
        <authorList>
            <person name="Yamazaki M."/>
            <person name="Fukaya M."/>
            <person name="Abe M."/>
            <person name="Ikeno K."/>
            <person name="Kakizaki T."/>
            <person name="Watanabe M."/>
            <person name="Sakimura K."/>
        </authorList>
    </citation>
    <scope>NUCLEOTIDE SEQUENCE [MRNA] (ISOFORMS 1; 2 AND 3)</scope>
    <scope>DEVELOPMENTAL STAGE</scope>
    <scope>TISSUE SPECIFICITY</scope>
    <scope>PALMITOYLATION OF ISOFORM 2</scope>
    <source>
        <tissue>Brain</tissue>
    </source>
</reference>
<reference key="2">
    <citation type="journal article" date="2005" name="Science">
        <title>The transcriptional landscape of the mammalian genome.</title>
        <authorList>
            <person name="Carninci P."/>
            <person name="Kasukawa T."/>
            <person name="Katayama S."/>
            <person name="Gough J."/>
            <person name="Frith M.C."/>
            <person name="Maeda N."/>
            <person name="Oyama R."/>
            <person name="Ravasi T."/>
            <person name="Lenhard B."/>
            <person name="Wells C."/>
            <person name="Kodzius R."/>
            <person name="Shimokawa K."/>
            <person name="Bajic V.B."/>
            <person name="Brenner S.E."/>
            <person name="Batalov S."/>
            <person name="Forrest A.R."/>
            <person name="Zavolan M."/>
            <person name="Davis M.J."/>
            <person name="Wilming L.G."/>
            <person name="Aidinis V."/>
            <person name="Allen J.E."/>
            <person name="Ambesi-Impiombato A."/>
            <person name="Apweiler R."/>
            <person name="Aturaliya R.N."/>
            <person name="Bailey T.L."/>
            <person name="Bansal M."/>
            <person name="Baxter L."/>
            <person name="Beisel K.W."/>
            <person name="Bersano T."/>
            <person name="Bono H."/>
            <person name="Chalk A.M."/>
            <person name="Chiu K.P."/>
            <person name="Choudhary V."/>
            <person name="Christoffels A."/>
            <person name="Clutterbuck D.R."/>
            <person name="Crowe M.L."/>
            <person name="Dalla E."/>
            <person name="Dalrymple B.P."/>
            <person name="de Bono B."/>
            <person name="Della Gatta G."/>
            <person name="di Bernardo D."/>
            <person name="Down T."/>
            <person name="Engstrom P."/>
            <person name="Fagiolini M."/>
            <person name="Faulkner G."/>
            <person name="Fletcher C.F."/>
            <person name="Fukushima T."/>
            <person name="Furuno M."/>
            <person name="Futaki S."/>
            <person name="Gariboldi M."/>
            <person name="Georgii-Hemming P."/>
            <person name="Gingeras T.R."/>
            <person name="Gojobori T."/>
            <person name="Green R.E."/>
            <person name="Gustincich S."/>
            <person name="Harbers M."/>
            <person name="Hayashi Y."/>
            <person name="Hensch T.K."/>
            <person name="Hirokawa N."/>
            <person name="Hill D."/>
            <person name="Huminiecki L."/>
            <person name="Iacono M."/>
            <person name="Ikeo K."/>
            <person name="Iwama A."/>
            <person name="Ishikawa T."/>
            <person name="Jakt M."/>
            <person name="Kanapin A."/>
            <person name="Katoh M."/>
            <person name="Kawasawa Y."/>
            <person name="Kelso J."/>
            <person name="Kitamura H."/>
            <person name="Kitano H."/>
            <person name="Kollias G."/>
            <person name="Krishnan S.P."/>
            <person name="Kruger A."/>
            <person name="Kummerfeld S.K."/>
            <person name="Kurochkin I.V."/>
            <person name="Lareau L.F."/>
            <person name="Lazarevic D."/>
            <person name="Lipovich L."/>
            <person name="Liu J."/>
            <person name="Liuni S."/>
            <person name="McWilliam S."/>
            <person name="Madan Babu M."/>
            <person name="Madera M."/>
            <person name="Marchionni L."/>
            <person name="Matsuda H."/>
            <person name="Matsuzawa S."/>
            <person name="Miki H."/>
            <person name="Mignone F."/>
            <person name="Miyake S."/>
            <person name="Morris K."/>
            <person name="Mottagui-Tabar S."/>
            <person name="Mulder N."/>
            <person name="Nakano N."/>
            <person name="Nakauchi H."/>
            <person name="Ng P."/>
            <person name="Nilsson R."/>
            <person name="Nishiguchi S."/>
            <person name="Nishikawa S."/>
            <person name="Nori F."/>
            <person name="Ohara O."/>
            <person name="Okazaki Y."/>
            <person name="Orlando V."/>
            <person name="Pang K.C."/>
            <person name="Pavan W.J."/>
            <person name="Pavesi G."/>
            <person name="Pesole G."/>
            <person name="Petrovsky N."/>
            <person name="Piazza S."/>
            <person name="Reed J."/>
            <person name="Reid J.F."/>
            <person name="Ring B.Z."/>
            <person name="Ringwald M."/>
            <person name="Rost B."/>
            <person name="Ruan Y."/>
            <person name="Salzberg S.L."/>
            <person name="Sandelin A."/>
            <person name="Schneider C."/>
            <person name="Schoenbach C."/>
            <person name="Sekiguchi K."/>
            <person name="Semple C.A."/>
            <person name="Seno S."/>
            <person name="Sessa L."/>
            <person name="Sheng Y."/>
            <person name="Shibata Y."/>
            <person name="Shimada H."/>
            <person name="Shimada K."/>
            <person name="Silva D."/>
            <person name="Sinclair B."/>
            <person name="Sperling S."/>
            <person name="Stupka E."/>
            <person name="Sugiura K."/>
            <person name="Sultana R."/>
            <person name="Takenaka Y."/>
            <person name="Taki K."/>
            <person name="Tammoja K."/>
            <person name="Tan S.L."/>
            <person name="Tang S."/>
            <person name="Taylor M.S."/>
            <person name="Tegner J."/>
            <person name="Teichmann S.A."/>
            <person name="Ueda H.R."/>
            <person name="van Nimwegen E."/>
            <person name="Verardo R."/>
            <person name="Wei C.L."/>
            <person name="Yagi K."/>
            <person name="Yamanishi H."/>
            <person name="Zabarovsky E."/>
            <person name="Zhu S."/>
            <person name="Zimmer A."/>
            <person name="Hide W."/>
            <person name="Bult C."/>
            <person name="Grimmond S.M."/>
            <person name="Teasdale R.D."/>
            <person name="Liu E.T."/>
            <person name="Brusic V."/>
            <person name="Quackenbush J."/>
            <person name="Wahlestedt C."/>
            <person name="Mattick J.S."/>
            <person name="Hume D.A."/>
            <person name="Kai C."/>
            <person name="Sasaki D."/>
            <person name="Tomaru Y."/>
            <person name="Fukuda S."/>
            <person name="Kanamori-Katayama M."/>
            <person name="Suzuki M."/>
            <person name="Aoki J."/>
            <person name="Arakawa T."/>
            <person name="Iida J."/>
            <person name="Imamura K."/>
            <person name="Itoh M."/>
            <person name="Kato T."/>
            <person name="Kawaji H."/>
            <person name="Kawagashira N."/>
            <person name="Kawashima T."/>
            <person name="Kojima M."/>
            <person name="Kondo S."/>
            <person name="Konno H."/>
            <person name="Nakano K."/>
            <person name="Ninomiya N."/>
            <person name="Nishio T."/>
            <person name="Okada M."/>
            <person name="Plessy C."/>
            <person name="Shibata K."/>
            <person name="Shiraki T."/>
            <person name="Suzuki S."/>
            <person name="Tagami M."/>
            <person name="Waki K."/>
            <person name="Watahiki A."/>
            <person name="Okamura-Oho Y."/>
            <person name="Suzuki H."/>
            <person name="Kawai J."/>
            <person name="Hayashizaki Y."/>
        </authorList>
    </citation>
    <scope>NUCLEOTIDE SEQUENCE [LARGE SCALE MRNA] (ISOFORM 4)</scope>
    <source>
        <strain>C57BL/6J</strain>
        <tissue>Testis</tissue>
    </source>
</reference>
<reference key="3">
    <citation type="journal article" date="1998" name="Neuron">
        <title>PDZ proteins bind, cluster, and synaptically colocalize with Eph receptors and their ephrin ligands.</title>
        <authorList>
            <person name="Torres R."/>
            <person name="Firestein B.L."/>
            <person name="Dong H."/>
            <person name="Staudinger J."/>
            <person name="Olson E.N."/>
            <person name="Huganir R.L."/>
            <person name="Bredt D.S."/>
            <person name="Gale N.W."/>
            <person name="Yancopoulos G.D."/>
        </authorList>
    </citation>
    <scope>INTERACTION WITH EFNB1; EPHA7 AND EPHB2</scope>
</reference>
<reference key="4">
    <citation type="journal article" date="2002" name="Nature">
        <title>Glutamate-receptor-interacting protein GRIP1 directly steers kinesin to dendrites.</title>
        <authorList>
            <person name="Setou M."/>
            <person name="Seog D.-H."/>
            <person name="Tanaka Y."/>
            <person name="Kanai Y."/>
            <person name="Takei Y."/>
            <person name="Kawagishi M."/>
            <person name="Hirokawa N."/>
        </authorList>
    </citation>
    <scope>INTERACTION WITH KIF5A; KIF5B AND KIF5C</scope>
</reference>
<reference key="5">
    <citation type="journal article" date="2003" name="J. Biol. Chem.">
        <title>The proteoglycan NG2 is complexed with alpha-amino-3-hydroxy-5-methyl-4-isoxazolepropionic acid (AMPA) receptors by the PDZ glutamate receptor interaction protein (GRIP) in glial progenitor cells. Implications for glial-neuronal signaling.</title>
        <authorList>
            <person name="Stegmueller J."/>
            <person name="Werner H."/>
            <person name="Nave K.-A."/>
            <person name="Trotter J."/>
        </authorList>
    </citation>
    <scope>INTERACTION WITH CSPG4 AND GRIA2</scope>
    <scope>DOMAIN</scope>
    <scope>TISSUE SPECIFICITY</scope>
</reference>
<reference key="6">
    <citation type="journal article" date="2005" name="J. Biochem.">
        <title>Phospholipase Cdelta4 associates with glutamate receptor interacting protein 1 in testis.</title>
        <authorList>
            <person name="Irino Y."/>
            <person name="Ichinohe M."/>
            <person name="Nakamura Y."/>
            <person name="Nakahara M."/>
            <person name="Fukami K."/>
        </authorList>
    </citation>
    <scope>INTERACTION WITH PLCD4</scope>
</reference>
<reference key="7">
    <citation type="journal article" date="2005" name="Mol. Cell. Biol.">
        <title>GAC63, a GRIP1-dependent nuclear receptor coactivator.</title>
        <authorList>
            <person name="Chen Y.-H."/>
            <person name="Kim J.H."/>
            <person name="Stallcup M.R."/>
        </authorList>
    </citation>
    <scope>INTERACTION WITH SLC30A9</scope>
</reference>
<reference key="8">
    <citation type="journal article" date="2011" name="Cell">
        <title>The AAA+ ATPase Thorase regulates AMPA receptor-dependent synaptic plasticity and behavior.</title>
        <authorList>
            <person name="Zhang J."/>
            <person name="Wang Y."/>
            <person name="Chi Z."/>
            <person name="Keuss M.J."/>
            <person name="Pai Y.M."/>
            <person name="Kang H.C."/>
            <person name="Shin J.H."/>
            <person name="Bugayenko A."/>
            <person name="Wang H."/>
            <person name="Xiong Y."/>
            <person name="Pletnikov M.V."/>
            <person name="Mattson M.P."/>
            <person name="Dawson T.M."/>
            <person name="Dawson V.L."/>
        </authorList>
    </citation>
    <scope>INTERACTION WITH ATAD1 AND GRIA2</scope>
</reference>
<reference key="9">
    <citation type="submission" date="2004-05" db="PDB data bank">
        <title>Solution structure of the PDZ domain from mouse glutamate receptor interacting protein 1A-L (GRIP1) homolog.</title>
        <authorList>
            <consortium name="RIKEN structural genomics initiative (RSGI)"/>
        </authorList>
    </citation>
    <scope>STRUCTURE BY NMR OF 461-570</scope>
</reference>
<sequence>MIAVSFKCRCQILRRLTKDESPYTKSASQTKPPDGALAVRRQSIPEEFKGSTVVELMKKEGTTLGLTVSGGIDKDGKPRVSNLRQGGIAARSDQLDVGDYIKAVNGINLAKFRHDEIISLLKNVGERVVLEVEYELPPVSVQGSSVMFRTVEVTLHKEGNTFGFVIRGGAHDDRNKSRPVVITCVRPGGPADREGTIKPGDRLLSVDGIRLLGTTHAEAMSILKQCGQEATLLIEYDVSVMDSVATASGPLLVEVAKTPGASLGVALTTSVCCNKQVIVIDKIKSASIADRCGALHVGDHILSIDGTSMEYCTLAEATQFLANTTDQVKLEILPHHQTRLALKGPDHVKIQRSDRQHPWDAWASNQCGVHTNHHHNTYHPDHCRVPALTFPKALPPNSPPAMVPSSSPTSMSAYSLSSLNMGTLPRSLYSTSPRGTMMRRRLKKKDFKSSLSLASSTVGLAGQVVHTETTEVVLTADPVTGFGIQLQGSVFATETLSSPPLISYIEADSPAERCGVLQIGDRVMAINGIPTEDSTFEEANQLLRDSSITSKVTLEIEFDVAESVIPSSGTFHVKLPKKHSVELGITISSPSSRKPGDPLVISDIKKGSVAHRTGTLELGDKLLAIDNIRLDNCSMEDAVQILQQCEDLVKLKIRKDEDNSDEQESSGAIIYTVELKRYGGPLGITISGTEEPFDPIIISSLTKGGLAERTGAIHIGDRILAINSSSLKGKPLSEAIHLLQMAGETVTLKIKKQTDAQSASSPKKFPIPGHSGDLGDGEEDPSPIQKPGKLSDAYPSTVPSVDSAVDSWDGSGIDASYGSQGSTFQTSGYNYNTYDWRSPKQRTSLSPVPKPRSQTYPDVGLSNEDWDRSTASGFVGASDSADAEQEENFWSQALEDLETCGQSGILRELEEKADRRVSLRNMTLLATIMSGSTMSLNHEAPMARSQLGRQASFQERSSSRPHYSQTTRSNTLPSDVGRKSVTLRKMKQEIKEIMSPTPVELHKVTLYKDSGMEDFGFSVADGLLEKGVYVKNIRPAGPGDVGGLKPYDRLLQVNHVRTRDFDCCLVVPLIAESGNKLDLVISRNPLASQKSIEQPALPSDWSEQNSAFFQQPSHGGNLETREPTNTL</sequence>
<evidence type="ECO:0000250" key="1"/>
<evidence type="ECO:0000250" key="2">
    <source>
        <dbReference type="UniProtKB" id="P97879"/>
    </source>
</evidence>
<evidence type="ECO:0000250" key="3">
    <source>
        <dbReference type="UniProtKB" id="Q9Y3R0"/>
    </source>
</evidence>
<evidence type="ECO:0000255" key="4">
    <source>
        <dbReference type="PROSITE-ProRule" id="PRU00143"/>
    </source>
</evidence>
<evidence type="ECO:0000256" key="5">
    <source>
        <dbReference type="SAM" id="MobiDB-lite"/>
    </source>
</evidence>
<evidence type="ECO:0000269" key="6">
    <source>
    </source>
</evidence>
<evidence type="ECO:0000269" key="7">
    <source>
    </source>
</evidence>
<evidence type="ECO:0000303" key="8">
    <source>
    </source>
</evidence>
<evidence type="ECO:0000303" key="9">
    <source>
    </source>
</evidence>
<evidence type="ECO:0000305" key="10"/>
<evidence type="ECO:0007829" key="11">
    <source>
        <dbReference type="PDB" id="1V5Q"/>
    </source>
</evidence>
<dbReference type="EMBL" id="AB051560">
    <property type="protein sequence ID" value="BAB46929.1"/>
    <property type="molecule type" value="mRNA"/>
</dbReference>
<dbReference type="EMBL" id="AB051561">
    <property type="protein sequence ID" value="BAB46930.1"/>
    <property type="molecule type" value="mRNA"/>
</dbReference>
<dbReference type="EMBL" id="AB051562">
    <property type="protein sequence ID" value="BAB46931.1"/>
    <property type="molecule type" value="mRNA"/>
</dbReference>
<dbReference type="EMBL" id="AK029905">
    <property type="protein sequence ID" value="BAC26668.1"/>
    <property type="molecule type" value="mRNA"/>
</dbReference>
<dbReference type="EMBL" id="AK043821">
    <property type="protein sequence ID" value="BAC31662.2"/>
    <property type="molecule type" value="mRNA"/>
</dbReference>
<dbReference type="CCDS" id="CCDS24202.1">
    <molecule id="Q925T6-1"/>
</dbReference>
<dbReference type="CCDS" id="CCDS36071.1">
    <molecule id="Q925T6-2"/>
</dbReference>
<dbReference type="CCDS" id="CCDS36072.1">
    <molecule id="Q925T6-3"/>
</dbReference>
<dbReference type="CCDS" id="CCDS70114.1">
    <molecule id="Q925T6-4"/>
</dbReference>
<dbReference type="RefSeq" id="NP_001264221.1">
    <property type="nucleotide sequence ID" value="NM_001277292.1"/>
</dbReference>
<dbReference type="RefSeq" id="NP_001264223.1">
    <property type="nucleotide sequence ID" value="NM_001277294.1"/>
</dbReference>
<dbReference type="RefSeq" id="NP_001264224.1">
    <molecule id="Q925T6-4"/>
    <property type="nucleotide sequence ID" value="NM_001277295.1"/>
</dbReference>
<dbReference type="RefSeq" id="NP_083012.1">
    <molecule id="Q925T6-1"/>
    <property type="nucleotide sequence ID" value="NM_028736.2"/>
</dbReference>
<dbReference type="RefSeq" id="NP_570961.1">
    <molecule id="Q925T6-3"/>
    <property type="nucleotide sequence ID" value="NM_130891.2"/>
</dbReference>
<dbReference type="RefSeq" id="NP_597699.1">
    <molecule id="Q925T6-2"/>
    <property type="nucleotide sequence ID" value="NM_133442.2"/>
</dbReference>
<dbReference type="PDB" id="1V5Q">
    <property type="method" value="NMR"/>
    <property type="chains" value="A=461-569"/>
</dbReference>
<dbReference type="PDBsum" id="1V5Q"/>
<dbReference type="SMR" id="Q925T6"/>
<dbReference type="BioGRID" id="216454">
    <property type="interactions" value="16"/>
</dbReference>
<dbReference type="CORUM" id="Q925T6"/>
<dbReference type="FunCoup" id="Q925T6">
    <property type="interactions" value="426"/>
</dbReference>
<dbReference type="IntAct" id="Q925T6">
    <property type="interactions" value="17"/>
</dbReference>
<dbReference type="MINT" id="Q925T6"/>
<dbReference type="STRING" id="10090.ENSMUSP00000123234"/>
<dbReference type="GlyGen" id="Q925T6">
    <property type="glycosylation" value="4 sites, 2 N-linked glycans (2 sites), 1 O-linked glycan (2 sites)"/>
</dbReference>
<dbReference type="iPTMnet" id="Q925T6"/>
<dbReference type="PhosphoSitePlus" id="Q925T6"/>
<dbReference type="SwissPalm" id="Q925T6"/>
<dbReference type="PaxDb" id="10090-ENSMUSP00000123234"/>
<dbReference type="ProteomicsDB" id="269633">
    <molecule id="Q925T6-1"/>
</dbReference>
<dbReference type="ProteomicsDB" id="269634">
    <molecule id="Q925T6-2"/>
</dbReference>
<dbReference type="ProteomicsDB" id="269635">
    <molecule id="Q925T6-3"/>
</dbReference>
<dbReference type="ProteomicsDB" id="269636">
    <molecule id="Q925T6-4"/>
</dbReference>
<dbReference type="Antibodypedia" id="8598">
    <property type="antibodies" value="244 antibodies from 36 providers"/>
</dbReference>
<dbReference type="DNASU" id="74053"/>
<dbReference type="Ensembl" id="ENSMUST00000077871.14">
    <molecule id="Q925T6-2"/>
    <property type="protein sequence ID" value="ENSMUSP00000077033.7"/>
    <property type="gene ID" value="ENSMUSG00000034813.20"/>
</dbReference>
<dbReference type="Ensembl" id="ENSMUST00000105261.9">
    <molecule id="Q925T6-4"/>
    <property type="protein sequence ID" value="ENSMUSP00000100896.3"/>
    <property type="gene ID" value="ENSMUSG00000034813.20"/>
</dbReference>
<dbReference type="Ensembl" id="ENSMUST00000138410.8">
    <molecule id="Q925T6-1"/>
    <property type="protein sequence ID" value="ENSMUSP00000123234.2"/>
    <property type="gene ID" value="ENSMUSG00000034813.20"/>
</dbReference>
<dbReference type="Ensembl" id="ENSMUST00000144825.8">
    <molecule id="Q925T6-3"/>
    <property type="protein sequence ID" value="ENSMUSP00000121670.2"/>
    <property type="gene ID" value="ENSMUSG00000034813.20"/>
</dbReference>
<dbReference type="GeneID" id="74053"/>
<dbReference type="KEGG" id="mmu:74053"/>
<dbReference type="UCSC" id="uc007heg.2">
    <molecule id="Q925T6-2"/>
    <property type="organism name" value="mouse"/>
</dbReference>
<dbReference type="UCSC" id="uc007hek.2">
    <molecule id="Q925T6-1"/>
    <property type="organism name" value="mouse"/>
</dbReference>
<dbReference type="UCSC" id="uc007hel.2">
    <molecule id="Q925T6-3"/>
    <property type="organism name" value="mouse"/>
</dbReference>
<dbReference type="UCSC" id="uc007hep.2">
    <molecule id="Q925T6-4"/>
    <property type="organism name" value="mouse"/>
</dbReference>
<dbReference type="AGR" id="MGI:1921303"/>
<dbReference type="CTD" id="23426"/>
<dbReference type="MGI" id="MGI:1921303">
    <property type="gene designation" value="Grip1"/>
</dbReference>
<dbReference type="VEuPathDB" id="HostDB:ENSMUSG00000034813"/>
<dbReference type="eggNOG" id="KOG3528">
    <property type="taxonomic scope" value="Eukaryota"/>
</dbReference>
<dbReference type="GeneTree" id="ENSGT00940000158692"/>
<dbReference type="HOGENOM" id="CLU_004313_0_0_1"/>
<dbReference type="InParanoid" id="Q925T6"/>
<dbReference type="OMA" id="NHLELVI"/>
<dbReference type="PhylomeDB" id="Q925T6"/>
<dbReference type="TreeFam" id="TF326909"/>
<dbReference type="Reactome" id="R-MMU-416993">
    <property type="pathway name" value="Trafficking of GluR2-containing AMPA receptors"/>
</dbReference>
<dbReference type="BioGRID-ORCS" id="74053">
    <property type="hits" value="1 hit in 77 CRISPR screens"/>
</dbReference>
<dbReference type="CD-CODE" id="CE726F99">
    <property type="entry name" value="Postsynaptic density"/>
</dbReference>
<dbReference type="ChiTaRS" id="Grip1">
    <property type="organism name" value="mouse"/>
</dbReference>
<dbReference type="EvolutionaryTrace" id="Q925T6"/>
<dbReference type="PRO" id="PR:Q925T6"/>
<dbReference type="Proteomes" id="UP000000589">
    <property type="component" value="Chromosome 10"/>
</dbReference>
<dbReference type="RNAct" id="Q925T6">
    <property type="molecule type" value="protein"/>
</dbReference>
<dbReference type="Bgee" id="ENSMUSG00000034813">
    <property type="expression patterns" value="Expressed in rostral migratory stream and 192 other cell types or tissues"/>
</dbReference>
<dbReference type="ExpressionAtlas" id="Q925T6">
    <property type="expression patterns" value="baseline and differential"/>
</dbReference>
<dbReference type="GO" id="GO:0031410">
    <property type="term" value="C:cytoplasmic vesicle"/>
    <property type="evidence" value="ECO:0007669"/>
    <property type="project" value="UniProtKB-KW"/>
</dbReference>
<dbReference type="GO" id="GO:0030425">
    <property type="term" value="C:dendrite"/>
    <property type="evidence" value="ECO:0000314"/>
    <property type="project" value="MGI"/>
</dbReference>
<dbReference type="GO" id="GO:0005789">
    <property type="term" value="C:endoplasmic reticulum membrane"/>
    <property type="evidence" value="ECO:0007669"/>
    <property type="project" value="UniProtKB-SubCell"/>
</dbReference>
<dbReference type="GO" id="GO:0098978">
    <property type="term" value="C:glutamatergic synapse"/>
    <property type="evidence" value="ECO:0000314"/>
    <property type="project" value="SynGO"/>
</dbReference>
<dbReference type="GO" id="GO:0045121">
    <property type="term" value="C:membrane raft"/>
    <property type="evidence" value="ECO:0000314"/>
    <property type="project" value="MGI"/>
</dbReference>
<dbReference type="GO" id="GO:0043005">
    <property type="term" value="C:neuron projection"/>
    <property type="evidence" value="ECO:0000314"/>
    <property type="project" value="BHF-UCL"/>
</dbReference>
<dbReference type="GO" id="GO:0043204">
    <property type="term" value="C:perikaryon"/>
    <property type="evidence" value="ECO:0007669"/>
    <property type="project" value="UniProtKB-SubCell"/>
</dbReference>
<dbReference type="GO" id="GO:0005886">
    <property type="term" value="C:plasma membrane"/>
    <property type="evidence" value="ECO:0000314"/>
    <property type="project" value="BHF-UCL"/>
</dbReference>
<dbReference type="GO" id="GO:0014069">
    <property type="term" value="C:postsynaptic density"/>
    <property type="evidence" value="ECO:0007669"/>
    <property type="project" value="UniProtKB-SubCell"/>
</dbReference>
<dbReference type="GO" id="GO:0045211">
    <property type="term" value="C:postsynaptic membrane"/>
    <property type="evidence" value="ECO:0007669"/>
    <property type="project" value="UniProtKB-SubCell"/>
</dbReference>
<dbReference type="GO" id="GO:0055037">
    <property type="term" value="C:recycling endosome"/>
    <property type="evidence" value="ECO:0000315"/>
    <property type="project" value="MGI"/>
</dbReference>
<dbReference type="GO" id="GO:0098887">
    <property type="term" value="P:neurotransmitter receptor transport, endosome to postsynaptic membrane"/>
    <property type="evidence" value="ECO:0000314"/>
    <property type="project" value="SynGO"/>
</dbReference>
<dbReference type="GO" id="GO:0008104">
    <property type="term" value="P:protein localization"/>
    <property type="evidence" value="ECO:0000315"/>
    <property type="project" value="MGI"/>
</dbReference>
<dbReference type="GO" id="GO:0099003">
    <property type="term" value="P:vesicle-mediated transport in synapse"/>
    <property type="evidence" value="ECO:0000314"/>
    <property type="project" value="SynGO"/>
</dbReference>
<dbReference type="CDD" id="cd06687">
    <property type="entry name" value="PDZ1_GRIP1-2-like"/>
    <property type="match status" value="1"/>
</dbReference>
<dbReference type="CDD" id="cd06681">
    <property type="entry name" value="PDZ2_GRIP1-2-like"/>
    <property type="match status" value="1"/>
</dbReference>
<dbReference type="CDD" id="cd06684">
    <property type="entry name" value="PDZ3_GRIP1-2-like"/>
    <property type="match status" value="1"/>
</dbReference>
<dbReference type="CDD" id="cd06686">
    <property type="entry name" value="PDZ4_GRIP1-2-like"/>
    <property type="match status" value="1"/>
</dbReference>
<dbReference type="CDD" id="cd06682">
    <property type="entry name" value="PDZ5_GRIP1-2-like"/>
    <property type="match status" value="1"/>
</dbReference>
<dbReference type="CDD" id="cd06683">
    <property type="entry name" value="PDZ6_GRIP1-2-like"/>
    <property type="match status" value="1"/>
</dbReference>
<dbReference type="CDD" id="cd06685">
    <property type="entry name" value="PDZ7_GRIP1-2-like"/>
    <property type="match status" value="1"/>
</dbReference>
<dbReference type="FunFam" id="2.30.42.10:FF:000021">
    <property type="entry name" value="Glutamate receptor interacting protein 1"/>
    <property type="match status" value="1"/>
</dbReference>
<dbReference type="FunFam" id="2.30.42.10:FF:000022">
    <property type="entry name" value="Glutamate receptor interacting protein 1"/>
    <property type="match status" value="1"/>
</dbReference>
<dbReference type="FunFam" id="2.30.42.10:FF:000023">
    <property type="entry name" value="Glutamate receptor interacting protein 1"/>
    <property type="match status" value="1"/>
</dbReference>
<dbReference type="FunFam" id="2.30.42.10:FF:000025">
    <property type="entry name" value="Glutamate receptor interacting protein 1"/>
    <property type="match status" value="1"/>
</dbReference>
<dbReference type="FunFam" id="2.30.42.10:FF:000031">
    <property type="entry name" value="Glutamate receptor interacting protein 1"/>
    <property type="match status" value="1"/>
</dbReference>
<dbReference type="FunFam" id="2.30.42.10:FF:000034">
    <property type="entry name" value="Glutamate receptor interacting protein 1"/>
    <property type="match status" value="1"/>
</dbReference>
<dbReference type="FunFam" id="2.30.42.10:FF:000035">
    <property type="entry name" value="Glutamate receptor interacting protein 1"/>
    <property type="match status" value="1"/>
</dbReference>
<dbReference type="Gene3D" id="2.30.42.10">
    <property type="match status" value="7"/>
</dbReference>
<dbReference type="InterPro" id="IPR043545">
    <property type="entry name" value="GRIP1/2"/>
</dbReference>
<dbReference type="InterPro" id="IPR001478">
    <property type="entry name" value="PDZ"/>
</dbReference>
<dbReference type="InterPro" id="IPR041489">
    <property type="entry name" value="PDZ_6"/>
</dbReference>
<dbReference type="InterPro" id="IPR036034">
    <property type="entry name" value="PDZ_sf"/>
</dbReference>
<dbReference type="PANTHER" id="PTHR46227:SF3">
    <property type="entry name" value="GLUTAMATE RECEPTOR-INTERACTING PROTEIN 1"/>
    <property type="match status" value="1"/>
</dbReference>
<dbReference type="PANTHER" id="PTHR46227">
    <property type="entry name" value="GLUTAMATE RECEPTOR-INTERACTING PROTEIN GRIP"/>
    <property type="match status" value="1"/>
</dbReference>
<dbReference type="Pfam" id="PF00595">
    <property type="entry name" value="PDZ"/>
    <property type="match status" value="6"/>
</dbReference>
<dbReference type="Pfam" id="PF17820">
    <property type="entry name" value="PDZ_6"/>
    <property type="match status" value="1"/>
</dbReference>
<dbReference type="SMART" id="SM00228">
    <property type="entry name" value="PDZ"/>
    <property type="match status" value="7"/>
</dbReference>
<dbReference type="SUPFAM" id="SSF50156">
    <property type="entry name" value="PDZ domain-like"/>
    <property type="match status" value="7"/>
</dbReference>
<dbReference type="PROSITE" id="PS50106">
    <property type="entry name" value="PDZ"/>
    <property type="match status" value="7"/>
</dbReference>